<proteinExistence type="evidence at protein level"/>
<organism>
    <name type="scientific">Mus musculus</name>
    <name type="common">Mouse</name>
    <dbReference type="NCBI Taxonomy" id="10090"/>
    <lineage>
        <taxon>Eukaryota</taxon>
        <taxon>Metazoa</taxon>
        <taxon>Chordata</taxon>
        <taxon>Craniata</taxon>
        <taxon>Vertebrata</taxon>
        <taxon>Euteleostomi</taxon>
        <taxon>Mammalia</taxon>
        <taxon>Eutheria</taxon>
        <taxon>Euarchontoglires</taxon>
        <taxon>Glires</taxon>
        <taxon>Rodentia</taxon>
        <taxon>Myomorpha</taxon>
        <taxon>Muroidea</taxon>
        <taxon>Muridae</taxon>
        <taxon>Murinae</taxon>
        <taxon>Mus</taxon>
        <taxon>Mus</taxon>
    </lineage>
</organism>
<accession>Q91X05</accession>
<accession>Q8BWE6</accession>
<accession>Q91Z95</accession>
<reference key="1">
    <citation type="journal article" date="2001" name="J. Clin. Invest.">
        <title>Podocin, a raft-associated component of the glomerular slit diaphragm, interacts with CD2AP and nephrin.</title>
        <authorList>
            <person name="Schwarz K."/>
            <person name="Simons M."/>
            <person name="Reiser J."/>
            <person name="Saleem M.A."/>
            <person name="Faul C."/>
            <person name="Kriz W."/>
            <person name="Shaw A.S."/>
            <person name="Holzman L.B."/>
            <person name="Mundel P."/>
        </authorList>
    </citation>
    <scope>NUCLEOTIDE SEQUENCE [MRNA]</scope>
    <source>
        <strain>C57BL/6J</strain>
        <tissue>Kidney</tissue>
    </source>
</reference>
<reference key="2">
    <citation type="journal article" date="2001" name="J. Biol. Chem.">
        <title>Interaction with podocin facilitates nephrin signaling.</title>
        <authorList>
            <person name="Huber T.B."/>
            <person name="Kottgen M."/>
            <person name="Schilling B."/>
            <person name="Walz G."/>
            <person name="Benzing T."/>
        </authorList>
    </citation>
    <scope>NUCLEOTIDE SEQUENCE [MRNA]</scope>
</reference>
<reference key="3">
    <citation type="journal article" date="2004" name="Genome Res.">
        <title>The status, quality, and expansion of the NIH full-length cDNA project: the Mammalian Gene Collection (MGC).</title>
        <authorList>
            <consortium name="The MGC Project Team"/>
        </authorList>
    </citation>
    <scope>NUCLEOTIDE SEQUENCE [LARGE SCALE MRNA]</scope>
    <source>
        <strain>C57BL/6J</strain>
        <tissue>Kidney</tissue>
    </source>
</reference>
<reference key="4">
    <citation type="journal article" date="2005" name="Science">
        <title>The transcriptional landscape of the mammalian genome.</title>
        <authorList>
            <person name="Carninci P."/>
            <person name="Kasukawa T."/>
            <person name="Katayama S."/>
            <person name="Gough J."/>
            <person name="Frith M.C."/>
            <person name="Maeda N."/>
            <person name="Oyama R."/>
            <person name="Ravasi T."/>
            <person name="Lenhard B."/>
            <person name="Wells C."/>
            <person name="Kodzius R."/>
            <person name="Shimokawa K."/>
            <person name="Bajic V.B."/>
            <person name="Brenner S.E."/>
            <person name="Batalov S."/>
            <person name="Forrest A.R."/>
            <person name="Zavolan M."/>
            <person name="Davis M.J."/>
            <person name="Wilming L.G."/>
            <person name="Aidinis V."/>
            <person name="Allen J.E."/>
            <person name="Ambesi-Impiombato A."/>
            <person name="Apweiler R."/>
            <person name="Aturaliya R.N."/>
            <person name="Bailey T.L."/>
            <person name="Bansal M."/>
            <person name="Baxter L."/>
            <person name="Beisel K.W."/>
            <person name="Bersano T."/>
            <person name="Bono H."/>
            <person name="Chalk A.M."/>
            <person name="Chiu K.P."/>
            <person name="Choudhary V."/>
            <person name="Christoffels A."/>
            <person name="Clutterbuck D.R."/>
            <person name="Crowe M.L."/>
            <person name="Dalla E."/>
            <person name="Dalrymple B.P."/>
            <person name="de Bono B."/>
            <person name="Della Gatta G."/>
            <person name="di Bernardo D."/>
            <person name="Down T."/>
            <person name="Engstrom P."/>
            <person name="Fagiolini M."/>
            <person name="Faulkner G."/>
            <person name="Fletcher C.F."/>
            <person name="Fukushima T."/>
            <person name="Furuno M."/>
            <person name="Futaki S."/>
            <person name="Gariboldi M."/>
            <person name="Georgii-Hemming P."/>
            <person name="Gingeras T.R."/>
            <person name="Gojobori T."/>
            <person name="Green R.E."/>
            <person name="Gustincich S."/>
            <person name="Harbers M."/>
            <person name="Hayashi Y."/>
            <person name="Hensch T.K."/>
            <person name="Hirokawa N."/>
            <person name="Hill D."/>
            <person name="Huminiecki L."/>
            <person name="Iacono M."/>
            <person name="Ikeo K."/>
            <person name="Iwama A."/>
            <person name="Ishikawa T."/>
            <person name="Jakt M."/>
            <person name="Kanapin A."/>
            <person name="Katoh M."/>
            <person name="Kawasawa Y."/>
            <person name="Kelso J."/>
            <person name="Kitamura H."/>
            <person name="Kitano H."/>
            <person name="Kollias G."/>
            <person name="Krishnan S.P."/>
            <person name="Kruger A."/>
            <person name="Kummerfeld S.K."/>
            <person name="Kurochkin I.V."/>
            <person name="Lareau L.F."/>
            <person name="Lazarevic D."/>
            <person name="Lipovich L."/>
            <person name="Liu J."/>
            <person name="Liuni S."/>
            <person name="McWilliam S."/>
            <person name="Madan Babu M."/>
            <person name="Madera M."/>
            <person name="Marchionni L."/>
            <person name="Matsuda H."/>
            <person name="Matsuzawa S."/>
            <person name="Miki H."/>
            <person name="Mignone F."/>
            <person name="Miyake S."/>
            <person name="Morris K."/>
            <person name="Mottagui-Tabar S."/>
            <person name="Mulder N."/>
            <person name="Nakano N."/>
            <person name="Nakauchi H."/>
            <person name="Ng P."/>
            <person name="Nilsson R."/>
            <person name="Nishiguchi S."/>
            <person name="Nishikawa S."/>
            <person name="Nori F."/>
            <person name="Ohara O."/>
            <person name="Okazaki Y."/>
            <person name="Orlando V."/>
            <person name="Pang K.C."/>
            <person name="Pavan W.J."/>
            <person name="Pavesi G."/>
            <person name="Pesole G."/>
            <person name="Petrovsky N."/>
            <person name="Piazza S."/>
            <person name="Reed J."/>
            <person name="Reid J.F."/>
            <person name="Ring B.Z."/>
            <person name="Ringwald M."/>
            <person name="Rost B."/>
            <person name="Ruan Y."/>
            <person name="Salzberg S.L."/>
            <person name="Sandelin A."/>
            <person name="Schneider C."/>
            <person name="Schoenbach C."/>
            <person name="Sekiguchi K."/>
            <person name="Semple C.A."/>
            <person name="Seno S."/>
            <person name="Sessa L."/>
            <person name="Sheng Y."/>
            <person name="Shibata Y."/>
            <person name="Shimada H."/>
            <person name="Shimada K."/>
            <person name="Silva D."/>
            <person name="Sinclair B."/>
            <person name="Sperling S."/>
            <person name="Stupka E."/>
            <person name="Sugiura K."/>
            <person name="Sultana R."/>
            <person name="Takenaka Y."/>
            <person name="Taki K."/>
            <person name="Tammoja K."/>
            <person name="Tan S.L."/>
            <person name="Tang S."/>
            <person name="Taylor M.S."/>
            <person name="Tegner J."/>
            <person name="Teichmann S.A."/>
            <person name="Ueda H.R."/>
            <person name="van Nimwegen E."/>
            <person name="Verardo R."/>
            <person name="Wei C.L."/>
            <person name="Yagi K."/>
            <person name="Yamanishi H."/>
            <person name="Zabarovsky E."/>
            <person name="Zhu S."/>
            <person name="Zimmer A."/>
            <person name="Hide W."/>
            <person name="Bult C."/>
            <person name="Grimmond S.M."/>
            <person name="Teasdale R.D."/>
            <person name="Liu E.T."/>
            <person name="Brusic V."/>
            <person name="Quackenbush J."/>
            <person name="Wahlestedt C."/>
            <person name="Mattick J.S."/>
            <person name="Hume D.A."/>
            <person name="Kai C."/>
            <person name="Sasaki D."/>
            <person name="Tomaru Y."/>
            <person name="Fukuda S."/>
            <person name="Kanamori-Katayama M."/>
            <person name="Suzuki M."/>
            <person name="Aoki J."/>
            <person name="Arakawa T."/>
            <person name="Iida J."/>
            <person name="Imamura K."/>
            <person name="Itoh M."/>
            <person name="Kato T."/>
            <person name="Kawaji H."/>
            <person name="Kawagashira N."/>
            <person name="Kawashima T."/>
            <person name="Kojima M."/>
            <person name="Kondo S."/>
            <person name="Konno H."/>
            <person name="Nakano K."/>
            <person name="Ninomiya N."/>
            <person name="Nishio T."/>
            <person name="Okada M."/>
            <person name="Plessy C."/>
            <person name="Shibata K."/>
            <person name="Shiraki T."/>
            <person name="Suzuki S."/>
            <person name="Tagami M."/>
            <person name="Waki K."/>
            <person name="Watahiki A."/>
            <person name="Okamura-Oho Y."/>
            <person name="Suzuki H."/>
            <person name="Kawai J."/>
            <person name="Hayashizaki Y."/>
        </authorList>
    </citation>
    <scope>NUCLEOTIDE SEQUENCE [LARGE SCALE MRNA] OF 1-377</scope>
    <source>
        <strain>C57BL/6J</strain>
        <tissue>Kidney</tissue>
    </source>
</reference>
<reference key="5">
    <citation type="journal article" date="2003" name="FASEB J.">
        <title>NEPH1 defines a novel family of podocin interacting proteins.</title>
        <authorList>
            <person name="Sellin L."/>
            <person name="Huber T.B."/>
            <person name="Gerke P."/>
            <person name="Quack I."/>
            <person name="Pavenstaedt H."/>
            <person name="Walz G."/>
        </authorList>
    </citation>
    <scope>INTERACTION WITH KIRRL1</scope>
    <source>
        <strain>Swiss Webster</strain>
        <tissue>Brain</tissue>
    </source>
</reference>
<reference key="6">
    <citation type="journal article" date="2007" name="Proc. Natl. Acad. Sci. U.S.A.">
        <title>Nuclear relocation of the nephrin and CD2AP-binding protein dendrin promotes apoptosis of podocytes.</title>
        <authorList>
            <person name="Asanuma K."/>
            <person name="Campbell K.N."/>
            <person name="Kim K."/>
            <person name="Faul C."/>
            <person name="Mundel P."/>
        </authorList>
    </citation>
    <scope>INTERACTION WITH DDN</scope>
</reference>
<keyword id="KW-0449">Lipoprotein</keyword>
<keyword id="KW-0472">Membrane</keyword>
<keyword id="KW-0564">Palmitate</keyword>
<keyword id="KW-1185">Reference proteome</keyword>
<keyword id="KW-0812">Transmembrane</keyword>
<keyword id="KW-1133">Transmembrane helix</keyword>
<evidence type="ECO:0000250" key="1"/>
<evidence type="ECO:0000255" key="2"/>
<evidence type="ECO:0000256" key="3">
    <source>
        <dbReference type="SAM" id="MobiDB-lite"/>
    </source>
</evidence>
<evidence type="ECO:0000269" key="4">
    <source>
    </source>
</evidence>
<evidence type="ECO:0000269" key="5">
    <source>
    </source>
</evidence>
<evidence type="ECO:0000305" key="6"/>
<dbReference type="EMBL" id="AJ302048">
    <property type="protein sequence ID" value="CAC44636.1"/>
    <property type="molecule type" value="mRNA"/>
</dbReference>
<dbReference type="EMBL" id="AY050309">
    <property type="protein sequence ID" value="AAL06146.1"/>
    <property type="molecule type" value="mRNA"/>
</dbReference>
<dbReference type="EMBL" id="BC067401">
    <property type="protein sequence ID" value="AAH67401.1"/>
    <property type="molecule type" value="mRNA"/>
</dbReference>
<dbReference type="EMBL" id="AK052746">
    <property type="protein sequence ID" value="BAC35128.1"/>
    <property type="molecule type" value="mRNA"/>
</dbReference>
<dbReference type="CCDS" id="CCDS15391.1"/>
<dbReference type="RefSeq" id="NP_569723.1">
    <property type="nucleotide sequence ID" value="NM_130456.4"/>
</dbReference>
<dbReference type="SMR" id="Q91X05"/>
<dbReference type="BioGRID" id="228352">
    <property type="interactions" value="64"/>
</dbReference>
<dbReference type="DIP" id="DIP-61266N"/>
<dbReference type="FunCoup" id="Q91X05">
    <property type="interactions" value="36"/>
</dbReference>
<dbReference type="IntAct" id="Q91X05">
    <property type="interactions" value="7"/>
</dbReference>
<dbReference type="STRING" id="10090.ENSMUSP00000027896"/>
<dbReference type="iPTMnet" id="Q91X05"/>
<dbReference type="PhosphoSitePlus" id="Q91X05"/>
<dbReference type="jPOST" id="Q91X05"/>
<dbReference type="PaxDb" id="10090-ENSMUSP00000027896"/>
<dbReference type="ProteomicsDB" id="289716"/>
<dbReference type="Antibodypedia" id="34420">
    <property type="antibodies" value="135 antibodies from 30 providers"/>
</dbReference>
<dbReference type="DNASU" id="170484"/>
<dbReference type="Ensembl" id="ENSMUST00000027896.10">
    <property type="protein sequence ID" value="ENSMUSP00000027896.5"/>
    <property type="gene ID" value="ENSMUSG00000026602.10"/>
</dbReference>
<dbReference type="GeneID" id="170484"/>
<dbReference type="KEGG" id="mmu:170484"/>
<dbReference type="UCSC" id="uc007dch.1">
    <property type="organism name" value="mouse"/>
</dbReference>
<dbReference type="AGR" id="MGI:2157018"/>
<dbReference type="CTD" id="7827"/>
<dbReference type="MGI" id="MGI:2157018">
    <property type="gene designation" value="Nphs2"/>
</dbReference>
<dbReference type="VEuPathDB" id="HostDB:ENSMUSG00000026602"/>
<dbReference type="eggNOG" id="KOG2621">
    <property type="taxonomic scope" value="Eukaryota"/>
</dbReference>
<dbReference type="GeneTree" id="ENSGT01030000234614"/>
<dbReference type="InParanoid" id="Q91X05"/>
<dbReference type="OMA" id="AWDGFRA"/>
<dbReference type="OrthoDB" id="2105077at2759"/>
<dbReference type="PhylomeDB" id="Q91X05"/>
<dbReference type="TreeFam" id="TF105750"/>
<dbReference type="Reactome" id="R-MMU-373753">
    <property type="pathway name" value="Nephrin family interactions"/>
</dbReference>
<dbReference type="BioGRID-ORCS" id="170484">
    <property type="hits" value="1 hit in 76 CRISPR screens"/>
</dbReference>
<dbReference type="ChiTaRS" id="Nphs2">
    <property type="organism name" value="mouse"/>
</dbReference>
<dbReference type="PRO" id="PR:Q91X05"/>
<dbReference type="Proteomes" id="UP000000589">
    <property type="component" value="Chromosome 1"/>
</dbReference>
<dbReference type="RNAct" id="Q91X05">
    <property type="molecule type" value="protein"/>
</dbReference>
<dbReference type="Bgee" id="ENSMUSG00000026602">
    <property type="expression patterns" value="Expressed in renal glomerulus and 41 other cell types or tissues"/>
</dbReference>
<dbReference type="ExpressionAtlas" id="Q91X05">
    <property type="expression patterns" value="baseline and differential"/>
</dbReference>
<dbReference type="GO" id="GO:0071944">
    <property type="term" value="C:cell periphery"/>
    <property type="evidence" value="ECO:0000314"/>
    <property type="project" value="MGI"/>
</dbReference>
<dbReference type="GO" id="GO:0009898">
    <property type="term" value="C:cytoplasmic side of plasma membrane"/>
    <property type="evidence" value="ECO:0000314"/>
    <property type="project" value="UniProtKB"/>
</dbReference>
<dbReference type="GO" id="GO:0045121">
    <property type="term" value="C:membrane raft"/>
    <property type="evidence" value="ECO:0007669"/>
    <property type="project" value="Ensembl"/>
</dbReference>
<dbReference type="GO" id="GO:0005886">
    <property type="term" value="C:plasma membrane"/>
    <property type="evidence" value="ECO:0000314"/>
    <property type="project" value="MGI"/>
</dbReference>
<dbReference type="GO" id="GO:0032991">
    <property type="term" value="C:protein-containing complex"/>
    <property type="evidence" value="ECO:0007669"/>
    <property type="project" value="Ensembl"/>
</dbReference>
<dbReference type="GO" id="GO:0036057">
    <property type="term" value="C:slit diaphragm"/>
    <property type="evidence" value="ECO:0007669"/>
    <property type="project" value="Ensembl"/>
</dbReference>
<dbReference type="GO" id="GO:0030036">
    <property type="term" value="P:actin cytoskeleton organization"/>
    <property type="evidence" value="ECO:0007669"/>
    <property type="project" value="Ensembl"/>
</dbReference>
<dbReference type="GO" id="GO:0010467">
    <property type="term" value="P:gene expression"/>
    <property type="evidence" value="ECO:0000315"/>
    <property type="project" value="MGI"/>
</dbReference>
<dbReference type="GO" id="GO:0072249">
    <property type="term" value="P:metanephric podocyte development"/>
    <property type="evidence" value="ECO:0007669"/>
    <property type="project" value="Ensembl"/>
</dbReference>
<dbReference type="CDD" id="cd08827">
    <property type="entry name" value="SPFH_podocin"/>
    <property type="match status" value="1"/>
</dbReference>
<dbReference type="FunFam" id="3.30.479.30:FF:000004">
    <property type="entry name" value="Putative membrane protease family, stomatin"/>
    <property type="match status" value="1"/>
</dbReference>
<dbReference type="Gene3D" id="6.10.250.2090">
    <property type="match status" value="1"/>
</dbReference>
<dbReference type="Gene3D" id="3.30.479.30">
    <property type="entry name" value="Band 7 domain"/>
    <property type="match status" value="1"/>
</dbReference>
<dbReference type="InterPro" id="IPR043202">
    <property type="entry name" value="Band-7_stomatin-like"/>
</dbReference>
<dbReference type="InterPro" id="IPR001107">
    <property type="entry name" value="Band_7"/>
</dbReference>
<dbReference type="InterPro" id="IPR036013">
    <property type="entry name" value="Band_7/SPFH_dom_sf"/>
</dbReference>
<dbReference type="InterPro" id="IPR001972">
    <property type="entry name" value="Stomatin_HflK_fam"/>
</dbReference>
<dbReference type="PANTHER" id="PTHR10264">
    <property type="entry name" value="BAND 7 PROTEIN-RELATED"/>
    <property type="match status" value="1"/>
</dbReference>
<dbReference type="PANTHER" id="PTHR10264:SF127">
    <property type="entry name" value="PODOCIN"/>
    <property type="match status" value="1"/>
</dbReference>
<dbReference type="Pfam" id="PF01145">
    <property type="entry name" value="Band_7"/>
    <property type="match status" value="1"/>
</dbReference>
<dbReference type="PRINTS" id="PR00721">
    <property type="entry name" value="STOMATIN"/>
</dbReference>
<dbReference type="SMART" id="SM00244">
    <property type="entry name" value="PHB"/>
    <property type="match status" value="1"/>
</dbReference>
<dbReference type="SUPFAM" id="SSF117892">
    <property type="entry name" value="Band 7/SPFH domain"/>
    <property type="match status" value="1"/>
</dbReference>
<sequence length="385" mass="42337">MDSRARSSSREAHGRSSRSSSRDDKKAKAGRGSRGRARPDAGAERQSTGRTATRGEPRAPAATATVVDVDEVRGPGEEGTEVVALLESERPEEGIKPSGLGACEWLLVLASLIFIIMTFPFSIWFCIKVVQEYERVIIFRLGHLLPGRAKGPGLFFFLPCLDTYHKVDLRLQTLEIPFHEVVTKDMFIMEIDAVCYYRMENASLLLSSLAHVSKAIQFLVQTTMKRLLAHRSLTEILLERKSIAQDVKVALDAVTCIWGIKVERTEIKDVRLPAGLQHSLAVEAEAQRQAKVRVIAAEGEKAASESLRMAAEILSGTPAAVQLRYLHTLQSLSTEKPATVVLPLPFDMLSLLSSPGNRAQGSINYPSSSKPVEPLNPKKKDSPML</sequence>
<gene>
    <name type="primary">Nphs2</name>
</gene>
<name>PODO_MOUSE</name>
<comment type="function">
    <text evidence="1">Plays a role in the regulation of glomerular permeability, acting probably as a linker between the plasma membrane and the cytoskeleton.</text>
</comment>
<comment type="subunit">
    <text evidence="4 5">Interacts with nephrin/NPHS1, KIRRL1 and CD2AP. Interacts with DDN.</text>
</comment>
<comment type="subcellular location">
    <subcellularLocation>
        <location evidence="6">Membrane</location>
        <topology evidence="6">Single-pass membrane protein</topology>
    </subcellularLocation>
</comment>
<comment type="similarity">
    <text evidence="6">Belongs to the band 7/mec-2 family.</text>
</comment>
<feature type="chain" id="PRO_0000094036" description="Podocin">
    <location>
        <begin position="1"/>
        <end position="385"/>
    </location>
</feature>
<feature type="topological domain" description="Cytoplasmic" evidence="2">
    <location>
        <begin position="1"/>
        <end position="104"/>
    </location>
</feature>
<feature type="transmembrane region" description="Helical" evidence="2">
    <location>
        <begin position="105"/>
        <end position="125"/>
    </location>
</feature>
<feature type="topological domain" description="Extracellular" evidence="2">
    <location>
        <begin position="126"/>
        <end position="385"/>
    </location>
</feature>
<feature type="region of interest" description="Disordered" evidence="3">
    <location>
        <begin position="1"/>
        <end position="64"/>
    </location>
</feature>
<feature type="region of interest" description="Disordered" evidence="3">
    <location>
        <begin position="357"/>
        <end position="385"/>
    </location>
</feature>
<feature type="compositionally biased region" description="Basic and acidic residues" evidence="3">
    <location>
        <begin position="1"/>
        <end position="27"/>
    </location>
</feature>
<feature type="compositionally biased region" description="Polar residues" evidence="3">
    <location>
        <begin position="357"/>
        <end position="370"/>
    </location>
</feature>
<feature type="compositionally biased region" description="Basic and acidic residues" evidence="3">
    <location>
        <begin position="376"/>
        <end position="385"/>
    </location>
</feature>
<feature type="lipid moiety-binding region" description="S-palmitoyl cysteine" evidence="1">
    <location>
        <position position="103"/>
    </location>
</feature>
<feature type="sequence conflict" description="In Ref. 1; CAC44636." evidence="6" ref="1">
    <original>SR</original>
    <variation>FF</variation>
    <location>
        <begin position="3"/>
        <end position="4"/>
    </location>
</feature>
<protein>
    <recommendedName>
        <fullName>Podocin</fullName>
    </recommendedName>
</protein>